<accession>A6T328</accession>
<reference key="1">
    <citation type="journal article" date="2007" name="PLoS Genet.">
        <title>Genome analysis of Minibacterium massiliensis highlights the convergent evolution of water-living bacteria.</title>
        <authorList>
            <person name="Audic S."/>
            <person name="Robert C."/>
            <person name="Campagna B."/>
            <person name="Parinello H."/>
            <person name="Claverie J.-M."/>
            <person name="Raoult D."/>
            <person name="Drancourt M."/>
        </authorList>
    </citation>
    <scope>NUCLEOTIDE SEQUENCE [LARGE SCALE GENOMIC DNA]</scope>
    <source>
        <strain>Marseille</strain>
    </source>
</reference>
<evidence type="ECO:0000255" key="1">
    <source>
        <dbReference type="HAMAP-Rule" id="MF_00082"/>
    </source>
</evidence>
<comment type="function">
    <text evidence="1">Catalyzes the ATP-dependent phosphorylation of N-acetyl-L-glutamate.</text>
</comment>
<comment type="catalytic activity">
    <reaction evidence="1">
        <text>N-acetyl-L-glutamate + ATP = N-acetyl-L-glutamyl 5-phosphate + ADP</text>
        <dbReference type="Rhea" id="RHEA:14629"/>
        <dbReference type="ChEBI" id="CHEBI:30616"/>
        <dbReference type="ChEBI" id="CHEBI:44337"/>
        <dbReference type="ChEBI" id="CHEBI:57936"/>
        <dbReference type="ChEBI" id="CHEBI:456216"/>
        <dbReference type="EC" id="2.7.2.8"/>
    </reaction>
</comment>
<comment type="pathway">
    <text evidence="1">Amino-acid biosynthesis; L-arginine biosynthesis; N(2)-acetyl-L-ornithine from L-glutamate: step 2/4.</text>
</comment>
<comment type="subcellular location">
    <subcellularLocation>
        <location evidence="1">Cytoplasm</location>
    </subcellularLocation>
</comment>
<comment type="similarity">
    <text evidence="1">Belongs to the acetylglutamate kinase family. ArgB subfamily.</text>
</comment>
<sequence length="297" mass="32017">MNADLTVVSPQIQAQILAEALPYIRKFHGKTIVVKYGGNAMTEERLKHGFARDVILLKLVGMNPVVVHGGGPQIDNALKKIGKQGTFVQGMRITDEETMEVVEWVLGGEVQQDIVMLINHYGGQAVGLTGKDGGLIRAKKMQMPDKEHPGQFLDIGFVGDIEAINPAVVKALQDDAFIPIISPIGFGDDGQAYNINADVVAGKIAEILKAEKLIMMTNIAGVQDKQGNLLTDLSAREIDEMFEDGTISGGMLPKISSALDAAKSGVNTVHIIDGRIEHSLLLEVLTEQAFGTMIRSH</sequence>
<dbReference type="EC" id="2.7.2.8" evidence="1"/>
<dbReference type="EMBL" id="CP000269">
    <property type="protein sequence ID" value="ABR88637.1"/>
    <property type="molecule type" value="Genomic_DNA"/>
</dbReference>
<dbReference type="RefSeq" id="WP_012081078.1">
    <property type="nucleotide sequence ID" value="NC_009659.1"/>
</dbReference>
<dbReference type="SMR" id="A6T328"/>
<dbReference type="STRING" id="375286.mma_3235"/>
<dbReference type="KEGG" id="mms:mma_3235"/>
<dbReference type="eggNOG" id="COG0548">
    <property type="taxonomic scope" value="Bacteria"/>
</dbReference>
<dbReference type="HOGENOM" id="CLU_053680_0_0_4"/>
<dbReference type="OrthoDB" id="9803155at2"/>
<dbReference type="UniPathway" id="UPA00068">
    <property type="reaction ID" value="UER00107"/>
</dbReference>
<dbReference type="Proteomes" id="UP000006388">
    <property type="component" value="Chromosome"/>
</dbReference>
<dbReference type="GO" id="GO:0005737">
    <property type="term" value="C:cytoplasm"/>
    <property type="evidence" value="ECO:0007669"/>
    <property type="project" value="UniProtKB-SubCell"/>
</dbReference>
<dbReference type="GO" id="GO:0003991">
    <property type="term" value="F:acetylglutamate kinase activity"/>
    <property type="evidence" value="ECO:0007669"/>
    <property type="project" value="UniProtKB-UniRule"/>
</dbReference>
<dbReference type="GO" id="GO:0005524">
    <property type="term" value="F:ATP binding"/>
    <property type="evidence" value="ECO:0007669"/>
    <property type="project" value="UniProtKB-UniRule"/>
</dbReference>
<dbReference type="GO" id="GO:0042450">
    <property type="term" value="P:arginine biosynthetic process via ornithine"/>
    <property type="evidence" value="ECO:0007669"/>
    <property type="project" value="UniProtKB-UniRule"/>
</dbReference>
<dbReference type="GO" id="GO:0006526">
    <property type="term" value="P:L-arginine biosynthetic process"/>
    <property type="evidence" value="ECO:0007669"/>
    <property type="project" value="UniProtKB-UniPathway"/>
</dbReference>
<dbReference type="CDD" id="cd04250">
    <property type="entry name" value="AAK_NAGK-C"/>
    <property type="match status" value="1"/>
</dbReference>
<dbReference type="FunFam" id="3.40.1160.10:FF:000004">
    <property type="entry name" value="Acetylglutamate kinase"/>
    <property type="match status" value="1"/>
</dbReference>
<dbReference type="Gene3D" id="3.40.1160.10">
    <property type="entry name" value="Acetylglutamate kinase-like"/>
    <property type="match status" value="1"/>
</dbReference>
<dbReference type="HAMAP" id="MF_00082">
    <property type="entry name" value="ArgB"/>
    <property type="match status" value="1"/>
</dbReference>
<dbReference type="InterPro" id="IPR036393">
    <property type="entry name" value="AceGlu_kinase-like_sf"/>
</dbReference>
<dbReference type="InterPro" id="IPR004662">
    <property type="entry name" value="AcgluKinase_fam"/>
</dbReference>
<dbReference type="InterPro" id="IPR037528">
    <property type="entry name" value="ArgB"/>
</dbReference>
<dbReference type="InterPro" id="IPR001048">
    <property type="entry name" value="Asp/Glu/Uridylate_kinase"/>
</dbReference>
<dbReference type="InterPro" id="IPR001057">
    <property type="entry name" value="Glu/AcGlu_kinase"/>
</dbReference>
<dbReference type="InterPro" id="IPR041727">
    <property type="entry name" value="NAGK-C"/>
</dbReference>
<dbReference type="NCBIfam" id="TIGR00761">
    <property type="entry name" value="argB"/>
    <property type="match status" value="1"/>
</dbReference>
<dbReference type="PANTHER" id="PTHR23342">
    <property type="entry name" value="N-ACETYLGLUTAMATE SYNTHASE"/>
    <property type="match status" value="1"/>
</dbReference>
<dbReference type="PANTHER" id="PTHR23342:SF0">
    <property type="entry name" value="N-ACETYLGLUTAMATE SYNTHASE, MITOCHONDRIAL"/>
    <property type="match status" value="1"/>
</dbReference>
<dbReference type="Pfam" id="PF00696">
    <property type="entry name" value="AA_kinase"/>
    <property type="match status" value="1"/>
</dbReference>
<dbReference type="PIRSF" id="PIRSF000728">
    <property type="entry name" value="NAGK"/>
    <property type="match status" value="1"/>
</dbReference>
<dbReference type="PRINTS" id="PR00474">
    <property type="entry name" value="GLU5KINASE"/>
</dbReference>
<dbReference type="SUPFAM" id="SSF53633">
    <property type="entry name" value="Carbamate kinase-like"/>
    <property type="match status" value="1"/>
</dbReference>
<name>ARGB_JANMA</name>
<keyword id="KW-0028">Amino-acid biosynthesis</keyword>
<keyword id="KW-0055">Arginine biosynthesis</keyword>
<keyword id="KW-0067">ATP-binding</keyword>
<keyword id="KW-0963">Cytoplasm</keyword>
<keyword id="KW-0418">Kinase</keyword>
<keyword id="KW-0547">Nucleotide-binding</keyword>
<keyword id="KW-0808">Transferase</keyword>
<protein>
    <recommendedName>
        <fullName evidence="1">Acetylglutamate kinase</fullName>
        <ecNumber evidence="1">2.7.2.8</ecNumber>
    </recommendedName>
    <alternativeName>
        <fullName evidence="1">N-acetyl-L-glutamate 5-phosphotransferase</fullName>
    </alternativeName>
    <alternativeName>
        <fullName evidence="1">NAG kinase</fullName>
        <shortName evidence="1">NAGK</shortName>
    </alternativeName>
</protein>
<organism>
    <name type="scientific">Janthinobacterium sp. (strain Marseille)</name>
    <name type="common">Minibacterium massiliensis</name>
    <dbReference type="NCBI Taxonomy" id="375286"/>
    <lineage>
        <taxon>Bacteria</taxon>
        <taxon>Pseudomonadati</taxon>
        <taxon>Pseudomonadota</taxon>
        <taxon>Betaproteobacteria</taxon>
        <taxon>Burkholderiales</taxon>
        <taxon>Oxalobacteraceae</taxon>
        <taxon>Janthinobacterium</taxon>
    </lineage>
</organism>
<feature type="chain" id="PRO_0000335637" description="Acetylglutamate kinase">
    <location>
        <begin position="1"/>
        <end position="297"/>
    </location>
</feature>
<feature type="binding site" evidence="1">
    <location>
        <begin position="70"/>
        <end position="71"/>
    </location>
    <ligand>
        <name>substrate</name>
    </ligand>
</feature>
<feature type="binding site" evidence="1">
    <location>
        <position position="92"/>
    </location>
    <ligand>
        <name>substrate</name>
    </ligand>
</feature>
<feature type="binding site" evidence="1">
    <location>
        <position position="194"/>
    </location>
    <ligand>
        <name>substrate</name>
    </ligand>
</feature>
<feature type="site" description="Transition state stabilizer" evidence="1">
    <location>
        <position position="35"/>
    </location>
</feature>
<feature type="site" description="Transition state stabilizer" evidence="1">
    <location>
        <position position="254"/>
    </location>
</feature>
<proteinExistence type="inferred from homology"/>
<gene>
    <name evidence="1" type="primary">argB</name>
    <name type="ordered locus">mma_3235</name>
</gene>